<dbReference type="EC" id="1.3.5.2" evidence="1"/>
<dbReference type="EMBL" id="CP000090">
    <property type="protein sequence ID" value="AAZ60687.1"/>
    <property type="molecule type" value="Genomic_DNA"/>
</dbReference>
<dbReference type="SMR" id="Q472J6"/>
<dbReference type="STRING" id="264198.Reut_A1317"/>
<dbReference type="KEGG" id="reu:Reut_A1317"/>
<dbReference type="eggNOG" id="COG0167">
    <property type="taxonomic scope" value="Bacteria"/>
</dbReference>
<dbReference type="HOGENOM" id="CLU_013640_2_0_4"/>
<dbReference type="OrthoDB" id="9802377at2"/>
<dbReference type="UniPathway" id="UPA00070">
    <property type="reaction ID" value="UER00946"/>
</dbReference>
<dbReference type="GO" id="GO:0005737">
    <property type="term" value="C:cytoplasm"/>
    <property type="evidence" value="ECO:0007669"/>
    <property type="project" value="InterPro"/>
</dbReference>
<dbReference type="GO" id="GO:0005886">
    <property type="term" value="C:plasma membrane"/>
    <property type="evidence" value="ECO:0007669"/>
    <property type="project" value="UniProtKB-SubCell"/>
</dbReference>
<dbReference type="GO" id="GO:0106430">
    <property type="term" value="F:dihydroorotate dehydrogenase (quinone) activity"/>
    <property type="evidence" value="ECO:0007669"/>
    <property type="project" value="UniProtKB-EC"/>
</dbReference>
<dbReference type="GO" id="GO:0006207">
    <property type="term" value="P:'de novo' pyrimidine nucleobase biosynthetic process"/>
    <property type="evidence" value="ECO:0007669"/>
    <property type="project" value="InterPro"/>
</dbReference>
<dbReference type="GO" id="GO:0044205">
    <property type="term" value="P:'de novo' UMP biosynthetic process"/>
    <property type="evidence" value="ECO:0007669"/>
    <property type="project" value="UniProtKB-UniRule"/>
</dbReference>
<dbReference type="CDD" id="cd04738">
    <property type="entry name" value="DHOD_2_like"/>
    <property type="match status" value="1"/>
</dbReference>
<dbReference type="FunFam" id="3.20.20.70:FF:000028">
    <property type="entry name" value="Dihydroorotate dehydrogenase (quinone)"/>
    <property type="match status" value="1"/>
</dbReference>
<dbReference type="Gene3D" id="3.20.20.70">
    <property type="entry name" value="Aldolase class I"/>
    <property type="match status" value="1"/>
</dbReference>
<dbReference type="HAMAP" id="MF_00225">
    <property type="entry name" value="DHO_dh_type2"/>
    <property type="match status" value="1"/>
</dbReference>
<dbReference type="InterPro" id="IPR013785">
    <property type="entry name" value="Aldolase_TIM"/>
</dbReference>
<dbReference type="InterPro" id="IPR050074">
    <property type="entry name" value="DHO_dehydrogenase"/>
</dbReference>
<dbReference type="InterPro" id="IPR012135">
    <property type="entry name" value="Dihydroorotate_DH_1_2"/>
</dbReference>
<dbReference type="InterPro" id="IPR005719">
    <property type="entry name" value="Dihydroorotate_DH_2"/>
</dbReference>
<dbReference type="InterPro" id="IPR005720">
    <property type="entry name" value="Dihydroorotate_DH_cat"/>
</dbReference>
<dbReference type="InterPro" id="IPR001295">
    <property type="entry name" value="Dihydroorotate_DH_CS"/>
</dbReference>
<dbReference type="NCBIfam" id="NF003644">
    <property type="entry name" value="PRK05286.1-1"/>
    <property type="match status" value="1"/>
</dbReference>
<dbReference type="NCBIfam" id="NF003645">
    <property type="entry name" value="PRK05286.1-2"/>
    <property type="match status" value="1"/>
</dbReference>
<dbReference type="NCBIfam" id="NF003646">
    <property type="entry name" value="PRK05286.1-4"/>
    <property type="match status" value="1"/>
</dbReference>
<dbReference type="NCBIfam" id="NF003652">
    <property type="entry name" value="PRK05286.2-5"/>
    <property type="match status" value="1"/>
</dbReference>
<dbReference type="NCBIfam" id="TIGR01036">
    <property type="entry name" value="pyrD_sub2"/>
    <property type="match status" value="1"/>
</dbReference>
<dbReference type="PANTHER" id="PTHR48109:SF4">
    <property type="entry name" value="DIHYDROOROTATE DEHYDROGENASE (QUINONE), MITOCHONDRIAL"/>
    <property type="match status" value="1"/>
</dbReference>
<dbReference type="PANTHER" id="PTHR48109">
    <property type="entry name" value="DIHYDROOROTATE DEHYDROGENASE (QUINONE), MITOCHONDRIAL-RELATED"/>
    <property type="match status" value="1"/>
</dbReference>
<dbReference type="Pfam" id="PF01180">
    <property type="entry name" value="DHO_dh"/>
    <property type="match status" value="1"/>
</dbReference>
<dbReference type="PIRSF" id="PIRSF000164">
    <property type="entry name" value="DHO_oxidase"/>
    <property type="match status" value="1"/>
</dbReference>
<dbReference type="SUPFAM" id="SSF51395">
    <property type="entry name" value="FMN-linked oxidoreductases"/>
    <property type="match status" value="1"/>
</dbReference>
<dbReference type="PROSITE" id="PS00911">
    <property type="entry name" value="DHODEHASE_1"/>
    <property type="match status" value="1"/>
</dbReference>
<dbReference type="PROSITE" id="PS00912">
    <property type="entry name" value="DHODEHASE_2"/>
    <property type="match status" value="1"/>
</dbReference>
<reference key="1">
    <citation type="journal article" date="2010" name="PLoS ONE">
        <title>The complete multipartite genome sequence of Cupriavidus necator JMP134, a versatile pollutant degrader.</title>
        <authorList>
            <person name="Lykidis A."/>
            <person name="Perez-Pantoja D."/>
            <person name="Ledger T."/>
            <person name="Mavromatis K."/>
            <person name="Anderson I.J."/>
            <person name="Ivanova N.N."/>
            <person name="Hooper S.D."/>
            <person name="Lapidus A."/>
            <person name="Lucas S."/>
            <person name="Gonzalez B."/>
            <person name="Kyrpides N.C."/>
        </authorList>
    </citation>
    <scope>NUCLEOTIDE SEQUENCE [LARGE SCALE GENOMIC DNA]</scope>
    <source>
        <strain>JMP134 / LMG 1197</strain>
    </source>
</reference>
<sequence>MLNALYPLFRPALFSMDAEDAHHFTLNNLLRAQRLGLGGCIGNRIAEDPRTVMGVRFPNPVGLAAGLDKDGAYIDGLASFGFGFIEVGTVTPRAQPGNPRPRMFRLPQADALINRMGFNNGGVDAFIANVKASRWKAEGGVLGLNIGKNADTPIERAADDYLYCLERVYPHASYVTVNISSPNTKNLRQLQGASELDSLLSTLKAAQQRLADQHKRYVPVALKIAPDLDADQIGNIGDALVRHKIDGVIATNTTISRDAVKGLPHAEEAGGLSGRPVFEQSTHVVRALRQVVGDAVPIIGVGGIFSGADARAKIDAGAKLVQVYSGLIYRGPTLVRDCAAALRA</sequence>
<gene>
    <name evidence="1" type="primary">pyrD</name>
    <name type="ordered locus">Reut_A1317</name>
</gene>
<keyword id="KW-1003">Cell membrane</keyword>
<keyword id="KW-0285">Flavoprotein</keyword>
<keyword id="KW-0288">FMN</keyword>
<keyword id="KW-0472">Membrane</keyword>
<keyword id="KW-0560">Oxidoreductase</keyword>
<keyword id="KW-0665">Pyrimidine biosynthesis</keyword>
<comment type="function">
    <text evidence="1">Catalyzes the conversion of dihydroorotate to orotate with quinone as electron acceptor.</text>
</comment>
<comment type="catalytic activity">
    <reaction evidence="1">
        <text>(S)-dihydroorotate + a quinone = orotate + a quinol</text>
        <dbReference type="Rhea" id="RHEA:30187"/>
        <dbReference type="ChEBI" id="CHEBI:24646"/>
        <dbReference type="ChEBI" id="CHEBI:30839"/>
        <dbReference type="ChEBI" id="CHEBI:30864"/>
        <dbReference type="ChEBI" id="CHEBI:132124"/>
        <dbReference type="EC" id="1.3.5.2"/>
    </reaction>
</comment>
<comment type="cofactor">
    <cofactor evidence="1">
        <name>FMN</name>
        <dbReference type="ChEBI" id="CHEBI:58210"/>
    </cofactor>
    <text evidence="1">Binds 1 FMN per subunit.</text>
</comment>
<comment type="pathway">
    <text evidence="1">Pyrimidine metabolism; UMP biosynthesis via de novo pathway; orotate from (S)-dihydroorotate (quinone route): step 1/1.</text>
</comment>
<comment type="subunit">
    <text evidence="1">Monomer.</text>
</comment>
<comment type="subcellular location">
    <subcellularLocation>
        <location evidence="1">Cell membrane</location>
        <topology evidence="1">Peripheral membrane protein</topology>
    </subcellularLocation>
</comment>
<comment type="similarity">
    <text evidence="1">Belongs to the dihydroorotate dehydrogenase family. Type 2 subfamily.</text>
</comment>
<evidence type="ECO:0000255" key="1">
    <source>
        <dbReference type="HAMAP-Rule" id="MF_00225"/>
    </source>
</evidence>
<accession>Q472J6</accession>
<organism>
    <name type="scientific">Cupriavidus pinatubonensis (strain JMP 134 / LMG 1197)</name>
    <name type="common">Cupriavidus necator (strain JMP 134)</name>
    <dbReference type="NCBI Taxonomy" id="264198"/>
    <lineage>
        <taxon>Bacteria</taxon>
        <taxon>Pseudomonadati</taxon>
        <taxon>Pseudomonadota</taxon>
        <taxon>Betaproteobacteria</taxon>
        <taxon>Burkholderiales</taxon>
        <taxon>Burkholderiaceae</taxon>
        <taxon>Cupriavidus</taxon>
    </lineage>
</organism>
<protein>
    <recommendedName>
        <fullName evidence="1">Dihydroorotate dehydrogenase (quinone)</fullName>
        <ecNumber evidence="1">1.3.5.2</ecNumber>
    </recommendedName>
    <alternativeName>
        <fullName evidence="1">DHOdehase</fullName>
        <shortName evidence="1">DHOD</shortName>
        <shortName evidence="1">DHODase</shortName>
    </alternativeName>
    <alternativeName>
        <fullName evidence="1">Dihydroorotate oxidase</fullName>
    </alternativeName>
</protein>
<feature type="chain" id="PRO_1000024211" description="Dihydroorotate dehydrogenase (quinone)">
    <location>
        <begin position="1"/>
        <end position="344"/>
    </location>
</feature>
<feature type="active site" description="Nucleophile" evidence="1">
    <location>
        <position position="181"/>
    </location>
</feature>
<feature type="binding site" evidence="1">
    <location>
        <begin position="65"/>
        <end position="69"/>
    </location>
    <ligand>
        <name>FMN</name>
        <dbReference type="ChEBI" id="CHEBI:58210"/>
    </ligand>
</feature>
<feature type="binding site" evidence="1">
    <location>
        <position position="69"/>
    </location>
    <ligand>
        <name>substrate</name>
    </ligand>
</feature>
<feature type="binding site" evidence="1">
    <location>
        <position position="89"/>
    </location>
    <ligand>
        <name>FMN</name>
        <dbReference type="ChEBI" id="CHEBI:58210"/>
    </ligand>
</feature>
<feature type="binding site" evidence="1">
    <location>
        <begin position="114"/>
        <end position="118"/>
    </location>
    <ligand>
        <name>substrate</name>
    </ligand>
</feature>
<feature type="binding site" evidence="1">
    <location>
        <position position="145"/>
    </location>
    <ligand>
        <name>FMN</name>
        <dbReference type="ChEBI" id="CHEBI:58210"/>
    </ligand>
</feature>
<feature type="binding site" evidence="1">
    <location>
        <position position="178"/>
    </location>
    <ligand>
        <name>FMN</name>
        <dbReference type="ChEBI" id="CHEBI:58210"/>
    </ligand>
</feature>
<feature type="binding site" evidence="1">
    <location>
        <position position="178"/>
    </location>
    <ligand>
        <name>substrate</name>
    </ligand>
</feature>
<feature type="binding site" evidence="1">
    <location>
        <position position="183"/>
    </location>
    <ligand>
        <name>substrate</name>
    </ligand>
</feature>
<feature type="binding site" evidence="1">
    <location>
        <position position="223"/>
    </location>
    <ligand>
        <name>FMN</name>
        <dbReference type="ChEBI" id="CHEBI:58210"/>
    </ligand>
</feature>
<feature type="binding site" evidence="1">
    <location>
        <position position="251"/>
    </location>
    <ligand>
        <name>FMN</name>
        <dbReference type="ChEBI" id="CHEBI:58210"/>
    </ligand>
</feature>
<feature type="binding site" evidence="1">
    <location>
        <begin position="252"/>
        <end position="253"/>
    </location>
    <ligand>
        <name>substrate</name>
    </ligand>
</feature>
<feature type="binding site" evidence="1">
    <location>
        <position position="274"/>
    </location>
    <ligand>
        <name>FMN</name>
        <dbReference type="ChEBI" id="CHEBI:58210"/>
    </ligand>
</feature>
<feature type="binding site" evidence="1">
    <location>
        <position position="303"/>
    </location>
    <ligand>
        <name>FMN</name>
        <dbReference type="ChEBI" id="CHEBI:58210"/>
    </ligand>
</feature>
<feature type="binding site" evidence="1">
    <location>
        <begin position="324"/>
        <end position="325"/>
    </location>
    <ligand>
        <name>FMN</name>
        <dbReference type="ChEBI" id="CHEBI:58210"/>
    </ligand>
</feature>
<proteinExistence type="inferred from homology"/>
<name>PYRD_CUPPJ</name>